<comment type="function">
    <text evidence="1">Reversibly transfers an adenylyl group from ATP to 4'-phosphopantetheine, yielding dephospho-CoA (dPCoA) and pyrophosphate.</text>
</comment>
<comment type="catalytic activity">
    <reaction evidence="1">
        <text>(R)-4'-phosphopantetheine + ATP + H(+) = 3'-dephospho-CoA + diphosphate</text>
        <dbReference type="Rhea" id="RHEA:19801"/>
        <dbReference type="ChEBI" id="CHEBI:15378"/>
        <dbReference type="ChEBI" id="CHEBI:30616"/>
        <dbReference type="ChEBI" id="CHEBI:33019"/>
        <dbReference type="ChEBI" id="CHEBI:57328"/>
        <dbReference type="ChEBI" id="CHEBI:61723"/>
        <dbReference type="EC" id="2.7.7.3"/>
    </reaction>
</comment>
<comment type="cofactor">
    <cofactor evidence="1">
        <name>Mg(2+)</name>
        <dbReference type="ChEBI" id="CHEBI:18420"/>
    </cofactor>
</comment>
<comment type="pathway">
    <text evidence="1">Cofactor biosynthesis; coenzyme A biosynthesis; CoA from (R)-pantothenate: step 4/5.</text>
</comment>
<comment type="subunit">
    <text evidence="1">Homohexamer.</text>
</comment>
<comment type="subcellular location">
    <subcellularLocation>
        <location evidence="1">Cytoplasm</location>
    </subcellularLocation>
</comment>
<comment type="similarity">
    <text evidence="1">Belongs to the bacterial CoaD family.</text>
</comment>
<proteinExistence type="inferred from homology"/>
<accession>B5RMP6</accession>
<evidence type="ECO:0000255" key="1">
    <source>
        <dbReference type="HAMAP-Rule" id="MF_00151"/>
    </source>
</evidence>
<feature type="chain" id="PRO_1000096765" description="Phosphopantetheine adenylyltransferase">
    <location>
        <begin position="1"/>
        <end position="165"/>
    </location>
</feature>
<feature type="binding site" evidence="1">
    <location>
        <begin position="9"/>
        <end position="10"/>
    </location>
    <ligand>
        <name>ATP</name>
        <dbReference type="ChEBI" id="CHEBI:30616"/>
    </ligand>
</feature>
<feature type="binding site" evidence="1">
    <location>
        <position position="9"/>
    </location>
    <ligand>
        <name>substrate</name>
    </ligand>
</feature>
<feature type="binding site" evidence="1">
    <location>
        <position position="17"/>
    </location>
    <ligand>
        <name>ATP</name>
        <dbReference type="ChEBI" id="CHEBI:30616"/>
    </ligand>
</feature>
<feature type="binding site" evidence="1">
    <location>
        <position position="41"/>
    </location>
    <ligand>
        <name>substrate</name>
    </ligand>
</feature>
<feature type="binding site" evidence="1">
    <location>
        <position position="75"/>
    </location>
    <ligand>
        <name>substrate</name>
    </ligand>
</feature>
<feature type="binding site" evidence="1">
    <location>
        <position position="89"/>
    </location>
    <ligand>
        <name>substrate</name>
    </ligand>
</feature>
<feature type="binding site" evidence="1">
    <location>
        <begin position="90"/>
        <end position="92"/>
    </location>
    <ligand>
        <name>ATP</name>
        <dbReference type="ChEBI" id="CHEBI:30616"/>
    </ligand>
</feature>
<feature type="binding site" evidence="1">
    <location>
        <position position="100"/>
    </location>
    <ligand>
        <name>ATP</name>
        <dbReference type="ChEBI" id="CHEBI:30616"/>
    </ligand>
</feature>
<feature type="binding site" evidence="1">
    <location>
        <begin position="125"/>
        <end position="131"/>
    </location>
    <ligand>
        <name>ATP</name>
        <dbReference type="ChEBI" id="CHEBI:30616"/>
    </ligand>
</feature>
<feature type="site" description="Transition state stabilizer" evidence="1">
    <location>
        <position position="17"/>
    </location>
</feature>
<protein>
    <recommendedName>
        <fullName evidence="1">Phosphopantetheine adenylyltransferase</fullName>
        <ecNumber evidence="1">2.7.7.3</ecNumber>
    </recommendedName>
    <alternativeName>
        <fullName evidence="1">Dephospho-CoA pyrophosphorylase</fullName>
    </alternativeName>
    <alternativeName>
        <fullName evidence="1">Pantetheine-phosphate adenylyltransferase</fullName>
        <shortName evidence="1">PPAT</shortName>
    </alternativeName>
</protein>
<reference key="1">
    <citation type="journal article" date="2008" name="PLoS Genet.">
        <title>The genome of Borrelia recurrentis, the agent of deadly louse-borne relapsing fever, is a degraded subset of tick-borne Borrelia duttonii.</title>
        <authorList>
            <person name="Lescot M."/>
            <person name="Audic S."/>
            <person name="Robert C."/>
            <person name="Nguyen T.T."/>
            <person name="Blanc G."/>
            <person name="Cutler S.J."/>
            <person name="Wincker P."/>
            <person name="Couloux A."/>
            <person name="Claverie J.-M."/>
            <person name="Raoult D."/>
            <person name="Drancourt M."/>
        </authorList>
    </citation>
    <scope>NUCLEOTIDE SEQUENCE [LARGE SCALE GENOMIC DNA]</scope>
    <source>
        <strain>Ly</strain>
    </source>
</reference>
<gene>
    <name evidence="1" type="primary">coaD</name>
    <name type="ordered locus">BDU_704</name>
</gene>
<organism>
    <name type="scientific">Borrelia duttonii (strain Ly)</name>
    <dbReference type="NCBI Taxonomy" id="412419"/>
    <lineage>
        <taxon>Bacteria</taxon>
        <taxon>Pseudomonadati</taxon>
        <taxon>Spirochaetota</taxon>
        <taxon>Spirochaetia</taxon>
        <taxon>Spirochaetales</taxon>
        <taxon>Borreliaceae</taxon>
        <taxon>Borrelia</taxon>
    </lineage>
</organism>
<keyword id="KW-0067">ATP-binding</keyword>
<keyword id="KW-0173">Coenzyme A biosynthesis</keyword>
<keyword id="KW-0963">Cytoplasm</keyword>
<keyword id="KW-0460">Magnesium</keyword>
<keyword id="KW-0547">Nucleotide-binding</keyword>
<keyword id="KW-0548">Nucleotidyltransferase</keyword>
<keyword id="KW-0808">Transferase</keyword>
<sequence>MRAALFPGSFDPITWGHIDLVKRASLIFDKVIVLVANNSNKSYLLSDIERYELTFEVIMSLGWTKIFVDKYDGVILDYALKNNIGFIVRGVRAFHDFEFEFERYVVNNKLNSSIDTVFLPSSDKYLFVRSDLVKELIKNKNFNLSNFIPELVQKKLKSKFIDKLS</sequence>
<name>COAD_BORDL</name>
<dbReference type="EC" id="2.7.7.3" evidence="1"/>
<dbReference type="EMBL" id="CP000976">
    <property type="protein sequence ID" value="ACH93632.1"/>
    <property type="molecule type" value="Genomic_DNA"/>
</dbReference>
<dbReference type="RefSeq" id="WP_012538441.1">
    <property type="nucleotide sequence ID" value="NC_011229.1"/>
</dbReference>
<dbReference type="SMR" id="B5RMP6"/>
<dbReference type="STRING" id="412419.BDU_704"/>
<dbReference type="KEGG" id="bdu:BDU_704"/>
<dbReference type="eggNOG" id="COG0669">
    <property type="taxonomic scope" value="Bacteria"/>
</dbReference>
<dbReference type="HOGENOM" id="CLU_100149_1_1_12"/>
<dbReference type="OrthoDB" id="9806661at2"/>
<dbReference type="UniPathway" id="UPA00241">
    <property type="reaction ID" value="UER00355"/>
</dbReference>
<dbReference type="Proteomes" id="UP000000611">
    <property type="component" value="Chromosome"/>
</dbReference>
<dbReference type="GO" id="GO:0005737">
    <property type="term" value="C:cytoplasm"/>
    <property type="evidence" value="ECO:0007669"/>
    <property type="project" value="UniProtKB-SubCell"/>
</dbReference>
<dbReference type="GO" id="GO:0005524">
    <property type="term" value="F:ATP binding"/>
    <property type="evidence" value="ECO:0007669"/>
    <property type="project" value="UniProtKB-KW"/>
</dbReference>
<dbReference type="GO" id="GO:0004595">
    <property type="term" value="F:pantetheine-phosphate adenylyltransferase activity"/>
    <property type="evidence" value="ECO:0007669"/>
    <property type="project" value="UniProtKB-UniRule"/>
</dbReference>
<dbReference type="GO" id="GO:0015937">
    <property type="term" value="P:coenzyme A biosynthetic process"/>
    <property type="evidence" value="ECO:0007669"/>
    <property type="project" value="UniProtKB-UniRule"/>
</dbReference>
<dbReference type="Gene3D" id="3.40.50.620">
    <property type="entry name" value="HUPs"/>
    <property type="match status" value="1"/>
</dbReference>
<dbReference type="HAMAP" id="MF_00151">
    <property type="entry name" value="PPAT_bact"/>
    <property type="match status" value="1"/>
</dbReference>
<dbReference type="InterPro" id="IPR004821">
    <property type="entry name" value="Cyt_trans-like"/>
</dbReference>
<dbReference type="InterPro" id="IPR001980">
    <property type="entry name" value="PPAT"/>
</dbReference>
<dbReference type="InterPro" id="IPR014729">
    <property type="entry name" value="Rossmann-like_a/b/a_fold"/>
</dbReference>
<dbReference type="NCBIfam" id="TIGR01510">
    <property type="entry name" value="coaD_prev_kdtB"/>
    <property type="match status" value="1"/>
</dbReference>
<dbReference type="NCBIfam" id="TIGR00125">
    <property type="entry name" value="cyt_tran_rel"/>
    <property type="match status" value="1"/>
</dbReference>
<dbReference type="PANTHER" id="PTHR21342">
    <property type="entry name" value="PHOSPHOPANTETHEINE ADENYLYLTRANSFERASE"/>
    <property type="match status" value="1"/>
</dbReference>
<dbReference type="PANTHER" id="PTHR21342:SF1">
    <property type="entry name" value="PHOSPHOPANTETHEINE ADENYLYLTRANSFERASE"/>
    <property type="match status" value="1"/>
</dbReference>
<dbReference type="Pfam" id="PF01467">
    <property type="entry name" value="CTP_transf_like"/>
    <property type="match status" value="1"/>
</dbReference>
<dbReference type="PRINTS" id="PR01020">
    <property type="entry name" value="LPSBIOSNTHSS"/>
</dbReference>
<dbReference type="SUPFAM" id="SSF52374">
    <property type="entry name" value="Nucleotidylyl transferase"/>
    <property type="match status" value="1"/>
</dbReference>